<organism>
    <name type="scientific">Escherichia coli (strain UTI89 / UPEC)</name>
    <dbReference type="NCBI Taxonomy" id="364106"/>
    <lineage>
        <taxon>Bacteria</taxon>
        <taxon>Pseudomonadati</taxon>
        <taxon>Pseudomonadota</taxon>
        <taxon>Gammaproteobacteria</taxon>
        <taxon>Enterobacterales</taxon>
        <taxon>Enterobacteriaceae</taxon>
        <taxon>Escherichia</taxon>
    </lineage>
</organism>
<dbReference type="EMBL" id="CP000243">
    <property type="protein sequence ID" value="ABE06229.1"/>
    <property type="status" value="ALT_INIT"/>
    <property type="molecule type" value="Genomic_DNA"/>
</dbReference>
<dbReference type="RefSeq" id="WP_001295307.1">
    <property type="nucleotide sequence ID" value="NZ_CP064825.1"/>
</dbReference>
<dbReference type="SMR" id="Q1REI5"/>
<dbReference type="GeneID" id="93776744"/>
<dbReference type="KEGG" id="eci:UTI89_C0736"/>
<dbReference type="HOGENOM" id="CLU_047123_0_0_6"/>
<dbReference type="Proteomes" id="UP000001952">
    <property type="component" value="Chromosome"/>
</dbReference>
<dbReference type="GO" id="GO:0042597">
    <property type="term" value="C:periplasmic space"/>
    <property type="evidence" value="ECO:0007669"/>
    <property type="project" value="UniProtKB-SubCell"/>
</dbReference>
<dbReference type="GO" id="GO:0051301">
    <property type="term" value="P:cell division"/>
    <property type="evidence" value="ECO:0007669"/>
    <property type="project" value="UniProtKB-UniRule"/>
</dbReference>
<dbReference type="GO" id="GO:0017038">
    <property type="term" value="P:protein import"/>
    <property type="evidence" value="ECO:0007669"/>
    <property type="project" value="InterPro"/>
</dbReference>
<dbReference type="FunFam" id="2.120.10.30:FF:000022">
    <property type="entry name" value="Tol-Pal system protein TolB"/>
    <property type="match status" value="1"/>
</dbReference>
<dbReference type="FunFam" id="3.40.50.10070:FF:000001">
    <property type="entry name" value="Tol-Pal system protein TolB"/>
    <property type="match status" value="1"/>
</dbReference>
<dbReference type="Gene3D" id="2.120.10.30">
    <property type="entry name" value="TolB, C-terminal domain"/>
    <property type="match status" value="1"/>
</dbReference>
<dbReference type="Gene3D" id="3.40.50.10070">
    <property type="entry name" value="TolB, N-terminal domain"/>
    <property type="match status" value="1"/>
</dbReference>
<dbReference type="HAMAP" id="MF_00671">
    <property type="entry name" value="TolB"/>
    <property type="match status" value="1"/>
</dbReference>
<dbReference type="InterPro" id="IPR011042">
    <property type="entry name" value="6-blade_b-propeller_TolB-like"/>
</dbReference>
<dbReference type="InterPro" id="IPR011659">
    <property type="entry name" value="PD40"/>
</dbReference>
<dbReference type="InterPro" id="IPR014167">
    <property type="entry name" value="Tol-Pal_TolB"/>
</dbReference>
<dbReference type="InterPro" id="IPR007195">
    <property type="entry name" value="TolB_N"/>
</dbReference>
<dbReference type="NCBIfam" id="TIGR02800">
    <property type="entry name" value="propeller_TolB"/>
    <property type="match status" value="1"/>
</dbReference>
<dbReference type="PANTHER" id="PTHR36842:SF1">
    <property type="entry name" value="PROTEIN TOLB"/>
    <property type="match status" value="1"/>
</dbReference>
<dbReference type="PANTHER" id="PTHR36842">
    <property type="entry name" value="PROTEIN TOLB HOMOLOG"/>
    <property type="match status" value="1"/>
</dbReference>
<dbReference type="Pfam" id="PF07676">
    <property type="entry name" value="PD40"/>
    <property type="match status" value="4"/>
</dbReference>
<dbReference type="Pfam" id="PF04052">
    <property type="entry name" value="TolB_N"/>
    <property type="match status" value="1"/>
</dbReference>
<dbReference type="SUPFAM" id="SSF52964">
    <property type="entry name" value="TolB, N-terminal domain"/>
    <property type="match status" value="1"/>
</dbReference>
<dbReference type="SUPFAM" id="SSF69304">
    <property type="entry name" value="Tricorn protease N-terminal domain"/>
    <property type="match status" value="1"/>
</dbReference>
<protein>
    <recommendedName>
        <fullName evidence="1">Tol-Pal system protein TolB</fullName>
    </recommendedName>
</protein>
<comment type="function">
    <text evidence="1">Part of the Tol-Pal system, which plays a role in outer membrane invagination during cell division and is important for maintaining outer membrane integrity. TolB occupies a key intermediary position in the Tol-Pal system because it communicates directly with both membrane-embedded components, Pal in the outer membrane and TolA in the inner membrane.</text>
</comment>
<comment type="subunit">
    <text evidence="1">The Tol-Pal system is composed of five core proteins: the inner membrane proteins TolA, TolQ and TolR, the periplasmic protein TolB and the outer membrane protein Pal. They form a network linking the inner and outer membranes and the peptidoglycan layer.</text>
</comment>
<comment type="subcellular location">
    <subcellularLocation>
        <location evidence="1">Periplasm</location>
    </subcellularLocation>
</comment>
<comment type="similarity">
    <text evidence="1">Belongs to the TolB family.</text>
</comment>
<comment type="sequence caution" evidence="2">
    <conflict type="erroneous initiation">
        <sequence resource="EMBL-CDS" id="ABE06229"/>
    </conflict>
</comment>
<proteinExistence type="inferred from homology"/>
<accession>Q1REI5</accession>
<evidence type="ECO:0000255" key="1">
    <source>
        <dbReference type="HAMAP-Rule" id="MF_00671"/>
    </source>
</evidence>
<evidence type="ECO:0000305" key="2"/>
<reference key="1">
    <citation type="journal article" date="2006" name="Proc. Natl. Acad. Sci. U.S.A.">
        <title>Identification of genes subject to positive selection in uropathogenic strains of Escherichia coli: a comparative genomics approach.</title>
        <authorList>
            <person name="Chen S.L."/>
            <person name="Hung C.-S."/>
            <person name="Xu J."/>
            <person name="Reigstad C.S."/>
            <person name="Magrini V."/>
            <person name="Sabo A."/>
            <person name="Blasiar D."/>
            <person name="Bieri T."/>
            <person name="Meyer R.R."/>
            <person name="Ozersky P."/>
            <person name="Armstrong J.R."/>
            <person name="Fulton R.S."/>
            <person name="Latreille J.P."/>
            <person name="Spieth J."/>
            <person name="Hooton T.M."/>
            <person name="Mardis E.R."/>
            <person name="Hultgren S.J."/>
            <person name="Gordon J.I."/>
        </authorList>
    </citation>
    <scope>NUCLEOTIDE SEQUENCE [LARGE SCALE GENOMIC DNA]</scope>
    <source>
        <strain>UTI89 / UPEC</strain>
    </source>
</reference>
<name>TOLB_ECOUT</name>
<feature type="signal peptide" evidence="1">
    <location>
        <begin position="1"/>
        <end position="21"/>
    </location>
</feature>
<feature type="chain" id="PRO_0000259046" description="Tol-Pal system protein TolB" evidence="1">
    <location>
        <begin position="22"/>
        <end position="430"/>
    </location>
</feature>
<gene>
    <name evidence="1" type="primary">tolB</name>
    <name type="ordered locus">UTI89_C0736</name>
</gene>
<keyword id="KW-0131">Cell cycle</keyword>
<keyword id="KW-0132">Cell division</keyword>
<keyword id="KW-0574">Periplasm</keyword>
<keyword id="KW-0732">Signal</keyword>
<sequence>MKQALRVAFGFLILWASVLHAEVRIVIDSGVDSGRPIGVVPFQWAGPGAAPEDIGGIVAADLRNSGKFNPLDRARLPQQPGSAQEVQPAAWSALGIDAVVVGQVTPNPDGSYNVAYQLVDTGGAPGTVLAQNSYKVNKQWLRYAGHTASDEVFEKLTGIKGAFRTRIAYVVQTNGGQFPYELRVSDYDGYNQFVVHRSPQPLMSPAWSPDGSKLAYVTFESGRSALVIQTLANGAVRQVASFPRHNGAPAFSPDGSKLAFALSKTGSLNLYVMDLASGQIRQVTDGRSNNTEPTWFPDSQNLAFTSDQAGRPQVYKVNINGGAPQRITWEGSQNQDADVSSDGKFMVMVSSNGGQQHIAKQDLATGGVQVLSSTFLDETPSLAPNGTMVIYSSSQGMGSVLNLVSTDGRFKARLPATDGQVKFPAWSPYL</sequence>